<name>LYNX1_MACMU</name>
<reference key="1">
    <citation type="journal article" date="2005" name="Cell Tissue Res.">
        <title>Expression of lynx1 in developing lung and its modulation by prenatal nicotine exposure.</title>
        <authorList>
            <person name="Sekhon H.S."/>
            <person name="Song P."/>
            <person name="Jia Y."/>
            <person name="Lindstrom J."/>
            <person name="Spindel E.R."/>
        </authorList>
    </citation>
    <scope>NUCLEOTIDE SEQUENCE [MRNA]</scope>
    <scope>TISSUE SPECIFICITY</scope>
    <scope>DEVELOPMENTAL STAGE</scope>
    <scope>INDUCTION</scope>
</reference>
<reference key="2">
    <citation type="submission" date="2012-04" db="EMBL/GenBank/DDBJ databases">
        <title>De novo assembly of the rhesus macaque transcriptome from NextGen mRNA sequences.</title>
        <authorList>
            <person name="Pandey S."/>
            <person name="Maudhoo M.D."/>
            <person name="Guda C."/>
            <person name="Ferguson B."/>
            <person name="Fox H."/>
            <person name="Norgren R.B."/>
        </authorList>
    </citation>
    <scope>NUCLEOTIDE SEQUENCE [LARGE SCALE MRNA]</scope>
    <source>
        <tissue>Caudate nucleus</tissue>
        <tissue>Testis</tissue>
    </source>
</reference>
<reference key="3">
    <citation type="journal article" date="2011" name="Nat. Biotechnol.">
        <title>Genome sequencing and comparison of two nonhuman primate animal models, the cynomolgus and Chinese rhesus macaques.</title>
        <authorList>
            <person name="Yan G."/>
            <person name="Zhang G."/>
            <person name="Fang X."/>
            <person name="Zhang Y."/>
            <person name="Li C."/>
            <person name="Ling F."/>
            <person name="Cooper D.N."/>
            <person name="Li Q."/>
            <person name="Li Y."/>
            <person name="van Gool A.J."/>
            <person name="Du H."/>
            <person name="Chen J."/>
            <person name="Chen R."/>
            <person name="Zhang P."/>
            <person name="Huang Z."/>
            <person name="Thompson J.R."/>
            <person name="Meng Y."/>
            <person name="Bai Y."/>
            <person name="Wang J."/>
            <person name="Zhuo M."/>
            <person name="Wang T."/>
            <person name="Huang Y."/>
            <person name="Wei L."/>
            <person name="Li J."/>
            <person name="Wang Z."/>
            <person name="Hu H."/>
            <person name="Yang P."/>
            <person name="Le L."/>
            <person name="Stenson P.D."/>
            <person name="Li B."/>
            <person name="Liu X."/>
            <person name="Ball E.V."/>
            <person name="An N."/>
            <person name="Huang Q."/>
            <person name="Zhang Y."/>
            <person name="Fan W."/>
            <person name="Zhang X."/>
            <person name="Li Y."/>
            <person name="Wang W."/>
            <person name="Katze M.G."/>
            <person name="Su B."/>
            <person name="Nielsen R."/>
            <person name="Yang H."/>
            <person name="Wang J."/>
            <person name="Wang X."/>
            <person name="Wang J."/>
        </authorList>
    </citation>
    <scope>NUCLEOTIDE SEQUENCE [LARGE SCALE GENOMIC DNA]</scope>
    <source>
        <strain>17573</strain>
    </source>
</reference>
<feature type="signal peptide" evidence="4">
    <location>
        <begin position="1"/>
        <end position="22"/>
    </location>
</feature>
<feature type="chain" id="PRO_0000440675" description="Ly-6/neurotoxin-like protein 1" evidence="4">
    <location>
        <begin position="23"/>
        <end position="95"/>
    </location>
</feature>
<feature type="propeptide" id="PRO_0000440642" description="Removed in mature form" evidence="4">
    <location>
        <begin position="96"/>
        <end position="118"/>
    </location>
</feature>
<feature type="domain" description="UPAR/Ly6" evidence="4">
    <location>
        <begin position="23"/>
        <end position="107"/>
    </location>
</feature>
<feature type="lipid moiety-binding region" description="GPI-anchor amidated serine" evidence="4">
    <location>
        <position position="95"/>
    </location>
</feature>
<feature type="disulfide bond" evidence="1">
    <location>
        <begin position="25"/>
        <end position="48"/>
    </location>
</feature>
<feature type="disulfide bond" evidence="1">
    <location>
        <begin position="28"/>
        <end position="35"/>
    </location>
</feature>
<feature type="disulfide bond" evidence="1">
    <location>
        <begin position="41"/>
        <end position="66"/>
    </location>
</feature>
<feature type="disulfide bond" evidence="1">
    <location>
        <begin position="70"/>
        <end position="87"/>
    </location>
</feature>
<feature type="disulfide bond" evidence="1">
    <location>
        <begin position="88"/>
        <end position="93"/>
    </location>
</feature>
<feature type="sequence conflict" description="In Ref. 1; AAR00319." evidence="6" ref="1">
    <original>G</original>
    <variation>S</variation>
    <location>
        <position position="97"/>
    </location>
</feature>
<dbReference type="EMBL" id="AY422956">
    <property type="protein sequence ID" value="AAR00319.1"/>
    <property type="molecule type" value="mRNA"/>
</dbReference>
<dbReference type="EMBL" id="JU336026">
    <property type="protein sequence ID" value="AFE79779.1"/>
    <property type="molecule type" value="mRNA"/>
</dbReference>
<dbReference type="EMBL" id="JV047999">
    <property type="protein sequence ID" value="AFI38070.1"/>
    <property type="molecule type" value="mRNA"/>
</dbReference>
<dbReference type="EMBL" id="CM001260">
    <property type="protein sequence ID" value="EHH28801.1"/>
    <property type="status" value="ALT_SEQ"/>
    <property type="molecule type" value="Genomic_DNA"/>
</dbReference>
<dbReference type="RefSeq" id="NP_001028116.1">
    <property type="nucleotide sequence ID" value="NM_001032944.1"/>
</dbReference>
<dbReference type="RefSeq" id="XP_015001580.1">
    <property type="nucleotide sequence ID" value="XM_015146094.1"/>
</dbReference>
<dbReference type="RefSeq" id="XP_015001581.1">
    <property type="nucleotide sequence ID" value="XM_015146095.1"/>
</dbReference>
<dbReference type="RefSeq" id="XP_015001582.1">
    <property type="nucleotide sequence ID" value="XM_015146096.1"/>
</dbReference>
<dbReference type="SMR" id="P0DP62"/>
<dbReference type="FunCoup" id="P0DP62">
    <property type="interactions" value="362"/>
</dbReference>
<dbReference type="PaxDb" id="9544-ENSMMUP00000019650"/>
<dbReference type="GeneID" id="574359"/>
<dbReference type="KEGG" id="mcc:574359"/>
<dbReference type="CTD" id="66004"/>
<dbReference type="eggNOG" id="ENOG502T3MP">
    <property type="taxonomic scope" value="Eukaryota"/>
</dbReference>
<dbReference type="InParanoid" id="P0DP62"/>
<dbReference type="OrthoDB" id="9836900at2759"/>
<dbReference type="Proteomes" id="UP000006718">
    <property type="component" value="Unassembled WGS sequence"/>
</dbReference>
<dbReference type="Proteomes" id="UP000013456">
    <property type="component" value="Chromosome 8"/>
</dbReference>
<dbReference type="GO" id="GO:0030425">
    <property type="term" value="C:dendrite"/>
    <property type="evidence" value="ECO:0007669"/>
    <property type="project" value="UniProtKB-SubCell"/>
</dbReference>
<dbReference type="GO" id="GO:0005783">
    <property type="term" value="C:endoplasmic reticulum"/>
    <property type="evidence" value="ECO:0007669"/>
    <property type="project" value="UniProtKB-SubCell"/>
</dbReference>
<dbReference type="GO" id="GO:0005886">
    <property type="term" value="C:plasma membrane"/>
    <property type="evidence" value="ECO:0000318"/>
    <property type="project" value="GO_Central"/>
</dbReference>
<dbReference type="GO" id="GO:0098552">
    <property type="term" value="C:side of membrane"/>
    <property type="evidence" value="ECO:0007669"/>
    <property type="project" value="UniProtKB-KW"/>
</dbReference>
<dbReference type="GO" id="GO:0045202">
    <property type="term" value="C:synapse"/>
    <property type="evidence" value="ECO:0007669"/>
    <property type="project" value="GOC"/>
</dbReference>
<dbReference type="GO" id="GO:0033130">
    <property type="term" value="F:acetylcholine receptor binding"/>
    <property type="evidence" value="ECO:0000250"/>
    <property type="project" value="UniProtKB"/>
</dbReference>
<dbReference type="GO" id="GO:0030550">
    <property type="term" value="F:acetylcholine receptor inhibitor activity"/>
    <property type="evidence" value="ECO:0000318"/>
    <property type="project" value="GO_Central"/>
</dbReference>
<dbReference type="GO" id="GO:0030548">
    <property type="term" value="F:acetylcholine receptor regulator activity"/>
    <property type="evidence" value="ECO:0000250"/>
    <property type="project" value="UniProtKB"/>
</dbReference>
<dbReference type="GO" id="GO:0095500">
    <property type="term" value="P:acetylcholine receptor signaling pathway"/>
    <property type="evidence" value="ECO:0000318"/>
    <property type="project" value="GO_Central"/>
</dbReference>
<dbReference type="GO" id="GO:0099601">
    <property type="term" value="P:regulation of neurotransmitter receptor activity"/>
    <property type="evidence" value="ECO:0000250"/>
    <property type="project" value="UniProtKB"/>
</dbReference>
<dbReference type="CDD" id="cd23585">
    <property type="entry name" value="TFP_LU_ECD_LYNX1"/>
    <property type="match status" value="1"/>
</dbReference>
<dbReference type="FunFam" id="2.10.60.10:FF:000003">
    <property type="entry name" value="lymphocyte antigen 6E isoform X1"/>
    <property type="match status" value="1"/>
</dbReference>
<dbReference type="Gene3D" id="2.10.60.10">
    <property type="entry name" value="CD59"/>
    <property type="match status" value="1"/>
</dbReference>
<dbReference type="InterPro" id="IPR051110">
    <property type="entry name" value="Ly-6/neurotoxin-like_GPI-ap"/>
</dbReference>
<dbReference type="InterPro" id="IPR016054">
    <property type="entry name" value="LY6_UPA_recep-like"/>
</dbReference>
<dbReference type="InterPro" id="IPR045860">
    <property type="entry name" value="Snake_toxin-like_sf"/>
</dbReference>
<dbReference type="InterPro" id="IPR035076">
    <property type="entry name" value="Toxin/TOLIP"/>
</dbReference>
<dbReference type="PANTHER" id="PTHR16983:SF27">
    <property type="entry name" value="LY-6_NEUROTOXIN-LIKE PROTEIN 1"/>
    <property type="match status" value="1"/>
</dbReference>
<dbReference type="PANTHER" id="PTHR16983">
    <property type="entry name" value="UPAR/LY6 DOMAIN-CONTAINING PROTEIN"/>
    <property type="match status" value="1"/>
</dbReference>
<dbReference type="Pfam" id="PF00087">
    <property type="entry name" value="Toxin_TOLIP"/>
    <property type="match status" value="1"/>
</dbReference>
<dbReference type="SMART" id="SM00134">
    <property type="entry name" value="LU"/>
    <property type="match status" value="1"/>
</dbReference>
<dbReference type="SUPFAM" id="SSF57302">
    <property type="entry name" value="Snake toxin-like"/>
    <property type="match status" value="1"/>
</dbReference>
<keyword id="KW-1003">Cell membrane</keyword>
<keyword id="KW-0966">Cell projection</keyword>
<keyword id="KW-1015">Disulfide bond</keyword>
<keyword id="KW-0256">Endoplasmic reticulum</keyword>
<keyword id="KW-0325">Glycoprotein</keyword>
<keyword id="KW-0336">GPI-anchor</keyword>
<keyword id="KW-0449">Lipoprotein</keyword>
<keyword id="KW-0472">Membrane</keyword>
<keyword id="KW-1185">Reference proteome</keyword>
<keyword id="KW-0732">Signal</keyword>
<gene>
    <name evidence="3" type="primary">LYNX1</name>
</gene>
<sequence>MTPLLTLFLVVLMGLPLAPVQALDCHVCAYNGDNCFNPMRCPAMVAYCMTTRTYYTPTRMKVSKSCVPSCFETVYDGYSKHASTTSCCQYDLCNSAGLAIPATLALAPVLLATLWGLL</sequence>
<accession>P0DP62</accession>
<accession>F6VEA7</accession>
<accession>F6VEB6</accession>
<accession>F6VED0</accession>
<accession>P61050</accession>
<proteinExistence type="evidence at protein level"/>
<protein>
    <recommendedName>
        <fullName evidence="6">Ly-6/neurotoxin-like protein 1</fullName>
    </recommendedName>
</protein>
<evidence type="ECO:0000250" key="1">
    <source>
        <dbReference type="UniProtKB" id="P0DP58"/>
    </source>
</evidence>
<evidence type="ECO:0000250" key="2">
    <source>
        <dbReference type="UniProtKB" id="P0DP60"/>
    </source>
</evidence>
<evidence type="ECO:0000250" key="3">
    <source>
        <dbReference type="UniProtKB" id="Q9BZG9"/>
    </source>
</evidence>
<evidence type="ECO:0000255" key="4"/>
<evidence type="ECO:0000269" key="5">
    <source>
    </source>
</evidence>
<evidence type="ECO:0000305" key="6"/>
<organism>
    <name type="scientific">Macaca mulatta</name>
    <name type="common">Rhesus macaque</name>
    <dbReference type="NCBI Taxonomy" id="9544"/>
    <lineage>
        <taxon>Eukaryota</taxon>
        <taxon>Metazoa</taxon>
        <taxon>Chordata</taxon>
        <taxon>Craniata</taxon>
        <taxon>Vertebrata</taxon>
        <taxon>Euteleostomi</taxon>
        <taxon>Mammalia</taxon>
        <taxon>Eutheria</taxon>
        <taxon>Euarchontoglires</taxon>
        <taxon>Primates</taxon>
        <taxon>Haplorrhini</taxon>
        <taxon>Catarrhini</taxon>
        <taxon>Cercopithecidae</taxon>
        <taxon>Cercopithecinae</taxon>
        <taxon>Macaca</taxon>
    </lineage>
</organism>
<comment type="function">
    <text evidence="1 2">Acts in different tissues through interaction to nicotinic acetylcholine receptors (nAChRs). The proposed role as modulator of nAChR activity seems to be dependent on the nAChR subtype and stoichiometry, and to involve an effect on nAChR trafficking and its cell surface expression, and on single channel properties of the nAChR inserted in the plasma membrane. Modulates functional properties of nicotinic acetylcholine receptors (nAChRs) to prevent excessive excitation, and hence neurodegeneration. Enhances desensitization by increasing both the rate and extent of desensitization of alpha-4:beta-2-containing nAChRs and slowing recovery from desensitization. Promotes large amplitude ACh-evoked currents through alpha-4:beta-2 nAChRs. Is involved in regulation of the nAChR pentameric assembly in the endoplasmic reticulum. Shifts stoichiometry from high sensitivity alpha-4(2):beta-2(3) to low sensitivity alpha-4(3):beta-2(2) nAChR. In vitro modulates alpha-3:beta-4-containing nAChRs. Reduces cell surface expression of (alpha-3:beta-4)(2):beta-4 and (alpha-3:beta-4)(2):alpha-5 nAChRs suggesting an interaction with nAChR alpha-3(-):(+)beta-4 subunit interfaces and an allosteric mode. Corresponding single channel effects characterized by decreased unitary conductance, altered burst proportions and enhanced desensitization/inactivation seem to depend on nAChR alpha:alpha subunit interfaces and are greater in (alpha-3:beta-2)(2):alpha-3 when compared to (alpha-3:beta-2)(2):alpha-5 nAChRs. Prevents plasticity in the primary visual cortex late in life.</text>
</comment>
<comment type="subunit">
    <text evidence="1 2">Interacts with nAChRs containing alpha-4:beta-2 (CHRNA4:CHRNB2) and alpha-7 (CHRNA7) subunits. Interacts with CHRNA4 probably in the endoplasmic reticulum prior to nAChR pentameric assembly (By similarity). Interacts with KCNA2/Potassium voltage-gated channel subfamily A member 2 (By similarity).</text>
</comment>
<comment type="subcellular location">
    <subcellularLocation>
        <location evidence="4">Cell membrane</location>
        <topology evidence="4">Lipid-anchor</topology>
        <topology evidence="4">GPI-anchor</topology>
    </subcellularLocation>
    <subcellularLocation>
        <location evidence="2">Cell projection</location>
        <location evidence="2">Dendrite</location>
    </subcellularLocation>
    <subcellularLocation>
        <location evidence="2">Endoplasmic reticulum</location>
    </subcellularLocation>
    <text evidence="2">Detected in Purkinje cells soma and proximal dendrites.</text>
</comment>
<comment type="tissue specificity">
    <text evidence="5">Expressed in lung predominantly in airway epithelial cells, submucous glands, and smooth muscle cells, in endothelial and smooth muscle cells in vessel walls and in alveolar type II cells (at protein level). Also expressed in brain.</text>
</comment>
<comment type="developmental stage">
    <text evidence="5">Detected as early as day 71 of gestation. Expression increases consistently in lungs throughout the prenatal period. After birth, expression continues well into adulthood. At 71 days of gestation (pseudoglandular phase), expression is detected in tracheal and proximal conducting airway epithelium. Expression decreases gradually toward the distal airways. Strong expression in the epithelium lining the tips of the dichotomous and monopodial airway buds. Weakly expressed in smooth muscle cells around the large airways. Weakly expressed in mesenchymal cells and not at all in the mesenchymal cells surrounding the airway buds. Not detected in vessels associated with large airways (at protein level). At 94 days of gestation, similar expression pattern, but expression increases and extends toward distal airway epithelium. Strong expression in type II cells that line the primitive air spaces of late canalicular and early saccular phase. More prominent expression in the smooth muscle cells surrounding the large airways. Begins to be weakly expressed in endothelial and smooth muscle cells in large vessels, but not in small distal vessels (at protein level). At day 134 of gestation, further increase in expression in the distal airway epithelium. In large airways, predominantly expressed in the ciliated epithelium. Expressed at low levels in the mucus-secreting cells and at high levels in the submucosal gland cells. Weakly expressed in paracartilaginous cells, but not in cells in the extra-cartilaginous layer. Not detected in type I alveolar cells. Strongly expressed in endothelial and smooth muscle cells increased in large vessels and in distal vessels (at protein level). At birth, similar pattern of expression. Slightly decreased expression in the proximal airways (at protein level).</text>
</comment>
<comment type="induction">
    <text evidence="5">Up-regulated by prenatal nicotine exposure.</text>
</comment>
<comment type="sequence caution" evidence="6">
    <conflict type="erroneous gene model prediction">
        <sequence resource="EMBL-CDS" id="EHH28801"/>
    </conflict>
</comment>